<organism>
    <name type="scientific">Pseudomonas aeruginosa (strain LESB58)</name>
    <dbReference type="NCBI Taxonomy" id="557722"/>
    <lineage>
        <taxon>Bacteria</taxon>
        <taxon>Pseudomonadati</taxon>
        <taxon>Pseudomonadota</taxon>
        <taxon>Gammaproteobacteria</taxon>
        <taxon>Pseudomonadales</taxon>
        <taxon>Pseudomonadaceae</taxon>
        <taxon>Pseudomonas</taxon>
    </lineage>
</organism>
<protein>
    <recommendedName>
        <fullName evidence="1">Cysteine--tRNA ligase</fullName>
        <ecNumber evidence="1">6.1.1.16</ecNumber>
    </recommendedName>
    <alternativeName>
        <fullName evidence="1">Cysteinyl-tRNA synthetase</fullName>
        <shortName evidence="1">CysRS</shortName>
    </alternativeName>
</protein>
<gene>
    <name evidence="1" type="primary">cysS</name>
    <name type="ordered locus">PLES_35341</name>
</gene>
<keyword id="KW-0030">Aminoacyl-tRNA synthetase</keyword>
<keyword id="KW-0067">ATP-binding</keyword>
<keyword id="KW-0963">Cytoplasm</keyword>
<keyword id="KW-0436">Ligase</keyword>
<keyword id="KW-0479">Metal-binding</keyword>
<keyword id="KW-0547">Nucleotide-binding</keyword>
<keyword id="KW-0648">Protein biosynthesis</keyword>
<keyword id="KW-0862">Zinc</keyword>
<dbReference type="EC" id="6.1.1.16" evidence="1"/>
<dbReference type="EMBL" id="FM209186">
    <property type="protein sequence ID" value="CAW28261.1"/>
    <property type="molecule type" value="Genomic_DNA"/>
</dbReference>
<dbReference type="RefSeq" id="WP_003113587.1">
    <property type="nucleotide sequence ID" value="NC_011770.1"/>
</dbReference>
<dbReference type="SMR" id="B7VB84"/>
<dbReference type="KEGG" id="pag:PLES_35341"/>
<dbReference type="HOGENOM" id="CLU_013528_0_1_6"/>
<dbReference type="GO" id="GO:0005829">
    <property type="term" value="C:cytosol"/>
    <property type="evidence" value="ECO:0007669"/>
    <property type="project" value="TreeGrafter"/>
</dbReference>
<dbReference type="GO" id="GO:0005524">
    <property type="term" value="F:ATP binding"/>
    <property type="evidence" value="ECO:0007669"/>
    <property type="project" value="UniProtKB-UniRule"/>
</dbReference>
<dbReference type="GO" id="GO:0004817">
    <property type="term" value="F:cysteine-tRNA ligase activity"/>
    <property type="evidence" value="ECO:0007669"/>
    <property type="project" value="UniProtKB-UniRule"/>
</dbReference>
<dbReference type="GO" id="GO:0008270">
    <property type="term" value="F:zinc ion binding"/>
    <property type="evidence" value="ECO:0007669"/>
    <property type="project" value="UniProtKB-UniRule"/>
</dbReference>
<dbReference type="GO" id="GO:0006423">
    <property type="term" value="P:cysteinyl-tRNA aminoacylation"/>
    <property type="evidence" value="ECO:0007669"/>
    <property type="project" value="UniProtKB-UniRule"/>
</dbReference>
<dbReference type="CDD" id="cd07963">
    <property type="entry name" value="Anticodon_Ia_Cys"/>
    <property type="match status" value="1"/>
</dbReference>
<dbReference type="CDD" id="cd00672">
    <property type="entry name" value="CysRS_core"/>
    <property type="match status" value="1"/>
</dbReference>
<dbReference type="FunFam" id="3.40.50.620:FF:000009">
    <property type="entry name" value="Cysteine--tRNA ligase"/>
    <property type="match status" value="1"/>
</dbReference>
<dbReference type="Gene3D" id="1.20.120.1910">
    <property type="entry name" value="Cysteine-tRNA ligase, C-terminal anti-codon recognition domain"/>
    <property type="match status" value="1"/>
</dbReference>
<dbReference type="Gene3D" id="3.40.50.620">
    <property type="entry name" value="HUPs"/>
    <property type="match status" value="1"/>
</dbReference>
<dbReference type="HAMAP" id="MF_00041">
    <property type="entry name" value="Cys_tRNA_synth"/>
    <property type="match status" value="1"/>
</dbReference>
<dbReference type="InterPro" id="IPR015803">
    <property type="entry name" value="Cys-tRNA-ligase"/>
</dbReference>
<dbReference type="InterPro" id="IPR015273">
    <property type="entry name" value="Cys-tRNA-synt_Ia_DALR"/>
</dbReference>
<dbReference type="InterPro" id="IPR024909">
    <property type="entry name" value="Cys-tRNA/MSH_ligase"/>
</dbReference>
<dbReference type="InterPro" id="IPR056411">
    <property type="entry name" value="CysS_C"/>
</dbReference>
<dbReference type="InterPro" id="IPR014729">
    <property type="entry name" value="Rossmann-like_a/b/a_fold"/>
</dbReference>
<dbReference type="InterPro" id="IPR032678">
    <property type="entry name" value="tRNA-synt_1_cat_dom"/>
</dbReference>
<dbReference type="InterPro" id="IPR009080">
    <property type="entry name" value="tRNAsynth_Ia_anticodon-bd"/>
</dbReference>
<dbReference type="NCBIfam" id="TIGR00435">
    <property type="entry name" value="cysS"/>
    <property type="match status" value="1"/>
</dbReference>
<dbReference type="PANTHER" id="PTHR10890:SF3">
    <property type="entry name" value="CYSTEINE--TRNA LIGASE, CYTOPLASMIC"/>
    <property type="match status" value="1"/>
</dbReference>
<dbReference type="PANTHER" id="PTHR10890">
    <property type="entry name" value="CYSTEINYL-TRNA SYNTHETASE"/>
    <property type="match status" value="1"/>
</dbReference>
<dbReference type="Pfam" id="PF23493">
    <property type="entry name" value="CysS_C"/>
    <property type="match status" value="1"/>
</dbReference>
<dbReference type="Pfam" id="PF09190">
    <property type="entry name" value="DALR_2"/>
    <property type="match status" value="1"/>
</dbReference>
<dbReference type="Pfam" id="PF01406">
    <property type="entry name" value="tRNA-synt_1e"/>
    <property type="match status" value="1"/>
</dbReference>
<dbReference type="PRINTS" id="PR00983">
    <property type="entry name" value="TRNASYNTHCYS"/>
</dbReference>
<dbReference type="SMART" id="SM00840">
    <property type="entry name" value="DALR_2"/>
    <property type="match status" value="1"/>
</dbReference>
<dbReference type="SUPFAM" id="SSF47323">
    <property type="entry name" value="Anticodon-binding domain of a subclass of class I aminoacyl-tRNA synthetases"/>
    <property type="match status" value="1"/>
</dbReference>
<dbReference type="SUPFAM" id="SSF52374">
    <property type="entry name" value="Nucleotidylyl transferase"/>
    <property type="match status" value="1"/>
</dbReference>
<proteinExistence type="inferred from homology"/>
<evidence type="ECO:0000255" key="1">
    <source>
        <dbReference type="HAMAP-Rule" id="MF_00041"/>
    </source>
</evidence>
<sequence length="460" mass="51277">MLQIYNTLSKTKEVFTPLVGNQVRMYVCGMTVYDYCHLGHGRSMVAFDVITRWLRHRGYDLTYVRNITDIDDKIINRANENGEPFDVLTERMIAAMHEDEARLNILKPDQEPRATDHIAGMHAMIQTLIDKGYAYAPGNGDVYYRVGKFAGYGKLSRRRVEDLRIGARIEPGEAKEDPLDFVLWKGAKPGEPSWSSPWGEGRPGWHIECSVMSTCCLGDSFDIHGGGNDLEFPHHENEIAQSEAATGKPYAKSWLHCGMITINGEKMSKSLGNFFTIREVLEKYHPEVVRYLLIASHYRSPINYSEENLREAKAALDRFYNALKGLPEAAPAEAAEYVERFAAAMDDDFNTAGACSVLFELAREVNRLRESDLSAAAALAARLKQLAGLLGVLQLEPEAFLQAGAEGKVDAAEVEALIQARLEARAAKNWAESDRIRDQLTAMGVVLEDGKGGTTWRLAD</sequence>
<accession>B7VB84</accession>
<feature type="chain" id="PRO_1000199084" description="Cysteine--tRNA ligase">
    <location>
        <begin position="1"/>
        <end position="460"/>
    </location>
</feature>
<feature type="short sequence motif" description="'HIGH' region">
    <location>
        <begin position="30"/>
        <end position="40"/>
    </location>
</feature>
<feature type="short sequence motif" description="'KMSKS' region">
    <location>
        <begin position="266"/>
        <end position="270"/>
    </location>
</feature>
<feature type="binding site" evidence="1">
    <location>
        <position position="28"/>
    </location>
    <ligand>
        <name>Zn(2+)</name>
        <dbReference type="ChEBI" id="CHEBI:29105"/>
    </ligand>
</feature>
<feature type="binding site" evidence="1">
    <location>
        <position position="209"/>
    </location>
    <ligand>
        <name>Zn(2+)</name>
        <dbReference type="ChEBI" id="CHEBI:29105"/>
    </ligand>
</feature>
<feature type="binding site" evidence="1">
    <location>
        <position position="234"/>
    </location>
    <ligand>
        <name>Zn(2+)</name>
        <dbReference type="ChEBI" id="CHEBI:29105"/>
    </ligand>
</feature>
<feature type="binding site" evidence="1">
    <location>
        <position position="238"/>
    </location>
    <ligand>
        <name>Zn(2+)</name>
        <dbReference type="ChEBI" id="CHEBI:29105"/>
    </ligand>
</feature>
<feature type="binding site" evidence="1">
    <location>
        <position position="269"/>
    </location>
    <ligand>
        <name>ATP</name>
        <dbReference type="ChEBI" id="CHEBI:30616"/>
    </ligand>
</feature>
<comment type="catalytic activity">
    <reaction evidence="1">
        <text>tRNA(Cys) + L-cysteine + ATP = L-cysteinyl-tRNA(Cys) + AMP + diphosphate</text>
        <dbReference type="Rhea" id="RHEA:17773"/>
        <dbReference type="Rhea" id="RHEA-COMP:9661"/>
        <dbReference type="Rhea" id="RHEA-COMP:9679"/>
        <dbReference type="ChEBI" id="CHEBI:30616"/>
        <dbReference type="ChEBI" id="CHEBI:33019"/>
        <dbReference type="ChEBI" id="CHEBI:35235"/>
        <dbReference type="ChEBI" id="CHEBI:78442"/>
        <dbReference type="ChEBI" id="CHEBI:78517"/>
        <dbReference type="ChEBI" id="CHEBI:456215"/>
        <dbReference type="EC" id="6.1.1.16"/>
    </reaction>
</comment>
<comment type="cofactor">
    <cofactor evidence="1">
        <name>Zn(2+)</name>
        <dbReference type="ChEBI" id="CHEBI:29105"/>
    </cofactor>
    <text evidence="1">Binds 1 zinc ion per subunit.</text>
</comment>
<comment type="subunit">
    <text evidence="1">Monomer.</text>
</comment>
<comment type="subcellular location">
    <subcellularLocation>
        <location evidence="1">Cytoplasm</location>
    </subcellularLocation>
</comment>
<comment type="similarity">
    <text evidence="1">Belongs to the class-I aminoacyl-tRNA synthetase family.</text>
</comment>
<reference key="1">
    <citation type="journal article" date="2009" name="Genome Res.">
        <title>Newly introduced genomic prophage islands are critical determinants of in vivo competitiveness in the Liverpool epidemic strain of Pseudomonas aeruginosa.</title>
        <authorList>
            <person name="Winstanley C."/>
            <person name="Langille M.G.I."/>
            <person name="Fothergill J.L."/>
            <person name="Kukavica-Ibrulj I."/>
            <person name="Paradis-Bleau C."/>
            <person name="Sanschagrin F."/>
            <person name="Thomson N.R."/>
            <person name="Winsor G.L."/>
            <person name="Quail M.A."/>
            <person name="Lennard N."/>
            <person name="Bignell A."/>
            <person name="Clarke L."/>
            <person name="Seeger K."/>
            <person name="Saunders D."/>
            <person name="Harris D."/>
            <person name="Parkhill J."/>
            <person name="Hancock R.E.W."/>
            <person name="Brinkman F.S.L."/>
            <person name="Levesque R.C."/>
        </authorList>
    </citation>
    <scope>NUCLEOTIDE SEQUENCE [LARGE SCALE GENOMIC DNA]</scope>
    <source>
        <strain>LESB58</strain>
    </source>
</reference>
<name>SYC_PSEA8</name>